<dbReference type="EMBL" id="AY510287">
    <property type="protein sequence ID" value="AAR87954.1"/>
    <property type="molecule type" value="mRNA"/>
</dbReference>
<dbReference type="EMBL" id="U36786">
    <property type="protein sequence ID" value="AAA92008.1"/>
    <property type="status" value="ALT_INIT"/>
    <property type="molecule type" value="mRNA"/>
</dbReference>
<dbReference type="RefSeq" id="NP_775135.2">
    <property type="nucleotide sequence ID" value="NM_173112.3"/>
</dbReference>
<dbReference type="SMR" id="Q5J3M3"/>
<dbReference type="STRING" id="10116.ENSRNOP00000047657"/>
<dbReference type="GlyCosmos" id="Q5J3M3">
    <property type="glycosylation" value="1 site, No reported glycans"/>
</dbReference>
<dbReference type="GlyGen" id="Q5J3M3">
    <property type="glycosylation" value="1 site"/>
</dbReference>
<dbReference type="PaxDb" id="10116-ENSRNOP00000047657"/>
<dbReference type="GeneID" id="286892"/>
<dbReference type="KEGG" id="rno:286892"/>
<dbReference type="UCSC" id="RGD:708395">
    <property type="organism name" value="rat"/>
</dbReference>
<dbReference type="AGR" id="RGD:708395"/>
<dbReference type="RGD" id="708395">
    <property type="gene designation" value="Vom1r101"/>
</dbReference>
<dbReference type="VEuPathDB" id="HostDB:ENSRNOG00000068663"/>
<dbReference type="eggNOG" id="ENOG502SNRJ">
    <property type="taxonomic scope" value="Eukaryota"/>
</dbReference>
<dbReference type="HOGENOM" id="CLU_058641_0_0_1"/>
<dbReference type="InParanoid" id="Q5J3M3"/>
<dbReference type="OrthoDB" id="77513at9989"/>
<dbReference type="PhylomeDB" id="Q5J3M3"/>
<dbReference type="PRO" id="PR:Q5J3M3"/>
<dbReference type="Proteomes" id="UP000002494">
    <property type="component" value="Chromosome 4"/>
</dbReference>
<dbReference type="GO" id="GO:0005886">
    <property type="term" value="C:plasma membrane"/>
    <property type="evidence" value="ECO:0007669"/>
    <property type="project" value="UniProtKB-SubCell"/>
</dbReference>
<dbReference type="GO" id="GO:0016503">
    <property type="term" value="F:pheromone receptor activity"/>
    <property type="evidence" value="ECO:0007669"/>
    <property type="project" value="InterPro"/>
</dbReference>
<dbReference type="GO" id="GO:0019236">
    <property type="term" value="P:response to pheromone"/>
    <property type="evidence" value="ECO:0007669"/>
    <property type="project" value="UniProtKB-KW"/>
</dbReference>
<dbReference type="GO" id="GO:0007606">
    <property type="term" value="P:sensory perception of chemical stimulus"/>
    <property type="evidence" value="ECO:0007669"/>
    <property type="project" value="UniProtKB-ARBA"/>
</dbReference>
<dbReference type="CDD" id="cd13949">
    <property type="entry name" value="7tm_V1R_pheromone"/>
    <property type="match status" value="1"/>
</dbReference>
<dbReference type="FunFam" id="1.20.1070.10:FF:000051">
    <property type="entry name" value="Vomeronasal type-1 receptor"/>
    <property type="match status" value="1"/>
</dbReference>
<dbReference type="Gene3D" id="1.20.1070.10">
    <property type="entry name" value="Rhodopsin 7-helix transmembrane proteins"/>
    <property type="match status" value="1"/>
</dbReference>
<dbReference type="InterPro" id="IPR017452">
    <property type="entry name" value="GPCR_Rhodpsn_7TM"/>
</dbReference>
<dbReference type="InterPro" id="IPR004072">
    <property type="entry name" value="Vmron_rcpt_1"/>
</dbReference>
<dbReference type="PANTHER" id="PTHR24062">
    <property type="entry name" value="VOMERONASAL TYPE-1 RECEPTOR"/>
    <property type="match status" value="1"/>
</dbReference>
<dbReference type="Pfam" id="PF03402">
    <property type="entry name" value="V1R"/>
    <property type="match status" value="1"/>
</dbReference>
<dbReference type="PRINTS" id="PR01534">
    <property type="entry name" value="VOMERONASL1R"/>
</dbReference>
<dbReference type="SUPFAM" id="SSF81321">
    <property type="entry name" value="Family A G protein-coupled receptor-like"/>
    <property type="match status" value="1"/>
</dbReference>
<dbReference type="PROSITE" id="PS50262">
    <property type="entry name" value="G_PROTEIN_RECEP_F1_2"/>
    <property type="match status" value="1"/>
</dbReference>
<protein>
    <recommendedName>
        <fullName>Vomeronasal type-1 receptor 101</fullName>
    </recommendedName>
    <alternativeName>
        <fullName>Pheromone receptor VN7</fullName>
    </alternativeName>
    <alternativeName>
        <fullName>Vomeronasal receptor 7</fullName>
    </alternativeName>
    <alternativeName>
        <fullName>Vomeronasal type-1 receptor B13</fullName>
    </alternativeName>
</protein>
<sequence>MNKVNILPSDTNMKITLFSELSVGISANSILFFAHLCMFFEENRSKPIDLCIAFLSLTQLMLLVTMGLIAADMFMAQGIWDITTCRSLIYFHRLLRGFNLCAACLLHILWTFTLSPRSSCLTKFKHKSPHHISGAYLFFCVLYMSFSSHLFVLVIATSNLTSDHFMYVTQSCSLLPMSYSRTSTFSLLMVTREVFLISLMALSSGYMVTLLWRHKKQAQHLHSTRLSSKASPQQRATRTILLLMTFFVVFYILGTVIFHSRTKFKDGSIFYCVQIIVSHSYATISPFVFVFSEKRIIKFFRSMCGRIVNT</sequence>
<gene>
    <name type="primary">Vom1r101</name>
    <name type="synonym">V1rb13</name>
    <name evidence="8" type="synonym">V1rb7</name>
</gene>
<organism>
    <name type="scientific">Rattus norvegicus</name>
    <name type="common">Rat</name>
    <dbReference type="NCBI Taxonomy" id="10116"/>
    <lineage>
        <taxon>Eukaryota</taxon>
        <taxon>Metazoa</taxon>
        <taxon>Chordata</taxon>
        <taxon>Craniata</taxon>
        <taxon>Vertebrata</taxon>
        <taxon>Euteleostomi</taxon>
        <taxon>Mammalia</taxon>
        <taxon>Eutheria</taxon>
        <taxon>Euarchontoglires</taxon>
        <taxon>Glires</taxon>
        <taxon>Rodentia</taxon>
        <taxon>Myomorpha</taxon>
        <taxon>Muroidea</taxon>
        <taxon>Muridae</taxon>
        <taxon>Murinae</taxon>
        <taxon>Rattus</taxon>
    </lineage>
</organism>
<name>VR101_RAT</name>
<keyword id="KW-1003">Cell membrane</keyword>
<keyword id="KW-1015">Disulfide bond</keyword>
<keyword id="KW-0297">G-protein coupled receptor</keyword>
<keyword id="KW-0325">Glycoprotein</keyword>
<keyword id="KW-0472">Membrane</keyword>
<keyword id="KW-0589">Pheromone response</keyword>
<keyword id="KW-0675">Receptor</keyword>
<keyword id="KW-1185">Reference proteome</keyword>
<keyword id="KW-0807">Transducer</keyword>
<keyword id="KW-0812">Transmembrane</keyword>
<keyword id="KW-1133">Transmembrane helix</keyword>
<comment type="function">
    <text evidence="1 4">Putative pheromone receptor implicated in the regulation of social as well as reproductive behavior.</text>
</comment>
<comment type="subcellular location">
    <subcellularLocation>
        <location evidence="5">Cell membrane</location>
        <topology evidence="2">Multi-pass membrane protein</topology>
    </subcellularLocation>
</comment>
<comment type="tissue specificity">
    <text evidence="4">Expressed in 1-4% of neurons of the vomeronasal organ. Only one pheromone receptor gene may be expressed in a particular neuron. Not expressed in the main olfactory epithelium.</text>
</comment>
<comment type="similarity">
    <text evidence="3">Belongs to the G-protein coupled receptor 1 family.</text>
</comment>
<comment type="sequence caution" evidence="5">
    <conflict type="erroneous initiation">
        <sequence resource="EMBL-CDS" id="AAA92008"/>
    </conflict>
    <text>Truncated N-terminus.</text>
</comment>
<evidence type="ECO:0000250" key="1">
    <source>
        <dbReference type="UniProtKB" id="Q8VIC6"/>
    </source>
</evidence>
<evidence type="ECO:0000255" key="2"/>
<evidence type="ECO:0000255" key="3">
    <source>
        <dbReference type="PROSITE-ProRule" id="PRU00521"/>
    </source>
</evidence>
<evidence type="ECO:0000269" key="4">
    <source>
    </source>
</evidence>
<evidence type="ECO:0000305" key="5"/>
<evidence type="ECO:0000312" key="6">
    <source>
        <dbReference type="EMBL" id="AAA92008.1"/>
    </source>
</evidence>
<evidence type="ECO:0000312" key="7">
    <source>
        <dbReference type="EMBL" id="AAR87954.1"/>
    </source>
</evidence>
<evidence type="ECO:0000312" key="8">
    <source>
        <dbReference type="RGD" id="708395"/>
    </source>
</evidence>
<reference evidence="7" key="1">
    <citation type="submission" date="2003-12" db="EMBL/GenBank/DDBJ databases">
        <title>Rat vomeronasal receptors.</title>
        <authorList>
            <person name="Capello L."/>
            <person name="Rodriguez I."/>
        </authorList>
    </citation>
    <scope>NUCLEOTIDE SEQUENCE [MRNA]</scope>
</reference>
<reference evidence="5 6" key="2">
    <citation type="journal article" date="1995" name="Cell">
        <title>A novel family of genes encoding putative pheromone receptors in mammals.</title>
        <authorList>
            <person name="Dulac C."/>
            <person name="Axel R."/>
        </authorList>
    </citation>
    <scope>NUCLEOTIDE SEQUENCE [MRNA] OF 29-310</scope>
    <scope>PUTATIVE FUNCTION</scope>
    <scope>TISSUE SPECIFICITY</scope>
    <source>
        <strain evidence="6">Sprague-Dawley</strain>
        <tissue evidence="6">Vomeronasal organ</tissue>
    </source>
</reference>
<proteinExistence type="evidence at transcript level"/>
<accession>Q5J3M3</accession>
<accession>Q62851</accession>
<feature type="chain" id="PRO_0000239984" description="Vomeronasal type-1 receptor 101">
    <location>
        <begin position="1"/>
        <end position="310"/>
    </location>
</feature>
<feature type="topological domain" description="Extracellular" evidence="2">
    <location>
        <begin position="1"/>
        <end position="19"/>
    </location>
</feature>
<feature type="transmembrane region" description="Helical; Name=1" evidence="2">
    <location>
        <begin position="20"/>
        <end position="40"/>
    </location>
</feature>
<feature type="topological domain" description="Cytoplasmic" evidence="2">
    <location>
        <begin position="41"/>
        <end position="49"/>
    </location>
</feature>
<feature type="transmembrane region" description="Helical; Name=2" evidence="2">
    <location>
        <begin position="50"/>
        <end position="70"/>
    </location>
</feature>
<feature type="topological domain" description="Extracellular" evidence="2">
    <location>
        <begin position="71"/>
        <end position="93"/>
    </location>
</feature>
<feature type="transmembrane region" description="Helical; Name=3" evidence="2">
    <location>
        <begin position="94"/>
        <end position="114"/>
    </location>
</feature>
<feature type="topological domain" description="Cytoplasmic" evidence="2">
    <location>
        <begin position="115"/>
        <end position="134"/>
    </location>
</feature>
<feature type="transmembrane region" description="Helical; Name=4" evidence="2">
    <location>
        <begin position="135"/>
        <end position="155"/>
    </location>
</feature>
<feature type="topological domain" description="Extracellular" evidence="2">
    <location>
        <begin position="156"/>
        <end position="193"/>
    </location>
</feature>
<feature type="transmembrane region" description="Helical; Name=5" evidence="2">
    <location>
        <begin position="194"/>
        <end position="214"/>
    </location>
</feature>
<feature type="topological domain" description="Cytoplasmic" evidence="2">
    <location>
        <begin position="215"/>
        <end position="238"/>
    </location>
</feature>
<feature type="transmembrane region" description="Helical; Name=6" evidence="2">
    <location>
        <begin position="239"/>
        <end position="259"/>
    </location>
</feature>
<feature type="topological domain" description="Extracellular" evidence="2">
    <location>
        <begin position="260"/>
        <end position="268"/>
    </location>
</feature>
<feature type="transmembrane region" description="Helical; Name=7" evidence="2">
    <location>
        <begin position="269"/>
        <end position="289"/>
    </location>
</feature>
<feature type="topological domain" description="Cytoplasmic" evidence="2">
    <location>
        <begin position="290"/>
        <end position="310"/>
    </location>
</feature>
<feature type="glycosylation site" description="N-linked (GlcNAc...) asparagine" evidence="2">
    <location>
        <position position="159"/>
    </location>
</feature>
<feature type="disulfide bond" evidence="3">
    <location>
        <begin position="85"/>
        <end position="172"/>
    </location>
</feature>